<organism>
    <name type="scientific">Pyrobaculum aerophilum (strain ATCC 51768 / DSM 7523 / JCM 9630 / CIP 104966 / NBRC 100827 / IM2)</name>
    <dbReference type="NCBI Taxonomy" id="178306"/>
    <lineage>
        <taxon>Archaea</taxon>
        <taxon>Thermoproteota</taxon>
        <taxon>Thermoprotei</taxon>
        <taxon>Thermoproteales</taxon>
        <taxon>Thermoproteaceae</taxon>
        <taxon>Pyrobaculum</taxon>
    </lineage>
</organism>
<accession>Q8ZTM9</accession>
<keyword id="KW-1185">Reference proteome</keyword>
<keyword id="KW-0687">Ribonucleoprotein</keyword>
<keyword id="KW-0689">Ribosomal protein</keyword>
<keyword id="KW-0694">RNA-binding</keyword>
<keyword id="KW-0699">rRNA-binding</keyword>
<evidence type="ECO:0000255" key="1">
    <source>
        <dbReference type="HAMAP-Rule" id="MF_01310"/>
    </source>
</evidence>
<evidence type="ECO:0000305" key="2"/>
<gene>
    <name evidence="1" type="primary">rps11</name>
    <name type="ordered locus">PAE3179</name>
</gene>
<dbReference type="EMBL" id="AE009441">
    <property type="protein sequence ID" value="AAL64730.1"/>
    <property type="molecule type" value="Genomic_DNA"/>
</dbReference>
<dbReference type="RefSeq" id="WP_011009198.1">
    <property type="nucleotide sequence ID" value="NC_003364.1"/>
</dbReference>
<dbReference type="SMR" id="Q8ZTM9"/>
<dbReference type="FunCoup" id="Q8ZTM9">
    <property type="interactions" value="192"/>
</dbReference>
<dbReference type="STRING" id="178306.PAE3179"/>
<dbReference type="EnsemblBacteria" id="AAL64730">
    <property type="protein sequence ID" value="AAL64730"/>
    <property type="gene ID" value="PAE3179"/>
</dbReference>
<dbReference type="GeneID" id="1463909"/>
<dbReference type="KEGG" id="pai:PAE3179"/>
<dbReference type="PATRIC" id="fig|178306.9.peg.2390"/>
<dbReference type="eggNOG" id="arCOG04240">
    <property type="taxonomic scope" value="Archaea"/>
</dbReference>
<dbReference type="HOGENOM" id="CLU_072439_6_1_2"/>
<dbReference type="InParanoid" id="Q8ZTM9"/>
<dbReference type="Proteomes" id="UP000002439">
    <property type="component" value="Chromosome"/>
</dbReference>
<dbReference type="GO" id="GO:0022627">
    <property type="term" value="C:cytosolic small ribosomal subunit"/>
    <property type="evidence" value="ECO:0000318"/>
    <property type="project" value="GO_Central"/>
</dbReference>
<dbReference type="GO" id="GO:0019843">
    <property type="term" value="F:rRNA binding"/>
    <property type="evidence" value="ECO:0007669"/>
    <property type="project" value="UniProtKB-UniRule"/>
</dbReference>
<dbReference type="GO" id="GO:0003735">
    <property type="term" value="F:structural constituent of ribosome"/>
    <property type="evidence" value="ECO:0000318"/>
    <property type="project" value="GO_Central"/>
</dbReference>
<dbReference type="GO" id="GO:0006412">
    <property type="term" value="P:translation"/>
    <property type="evidence" value="ECO:0000318"/>
    <property type="project" value="GO_Central"/>
</dbReference>
<dbReference type="FunFam" id="3.30.420.80:FF:000007">
    <property type="entry name" value="30S ribosomal protein S11"/>
    <property type="match status" value="1"/>
</dbReference>
<dbReference type="Gene3D" id="3.30.420.80">
    <property type="entry name" value="Ribosomal protein S11"/>
    <property type="match status" value="1"/>
</dbReference>
<dbReference type="HAMAP" id="MF_01310">
    <property type="entry name" value="Ribosomal_uS11"/>
    <property type="match status" value="1"/>
</dbReference>
<dbReference type="InterPro" id="IPR001971">
    <property type="entry name" value="Ribosomal_uS11"/>
</dbReference>
<dbReference type="InterPro" id="IPR019961">
    <property type="entry name" value="Ribosomal_uS11_archaeal"/>
</dbReference>
<dbReference type="InterPro" id="IPR018102">
    <property type="entry name" value="Ribosomal_uS11_CS"/>
</dbReference>
<dbReference type="InterPro" id="IPR036967">
    <property type="entry name" value="Ribosomal_uS11_sf"/>
</dbReference>
<dbReference type="NCBIfam" id="TIGR03628">
    <property type="entry name" value="arch_S11P"/>
    <property type="match status" value="1"/>
</dbReference>
<dbReference type="NCBIfam" id="NF007176">
    <property type="entry name" value="PRK09607.1"/>
    <property type="match status" value="1"/>
</dbReference>
<dbReference type="PANTHER" id="PTHR11759">
    <property type="entry name" value="40S RIBOSOMAL PROTEIN S14/30S RIBOSOMAL PROTEIN S11"/>
    <property type="match status" value="1"/>
</dbReference>
<dbReference type="Pfam" id="PF00411">
    <property type="entry name" value="Ribosomal_S11"/>
    <property type="match status" value="1"/>
</dbReference>
<dbReference type="PIRSF" id="PIRSF002131">
    <property type="entry name" value="Ribosomal_S11"/>
    <property type="match status" value="1"/>
</dbReference>
<dbReference type="SUPFAM" id="SSF53137">
    <property type="entry name" value="Translational machinery components"/>
    <property type="match status" value="1"/>
</dbReference>
<dbReference type="PROSITE" id="PS00054">
    <property type="entry name" value="RIBOSOMAL_S11"/>
    <property type="match status" value="1"/>
</dbReference>
<reference key="1">
    <citation type="journal article" date="2002" name="Proc. Natl. Acad. Sci. U.S.A.">
        <title>Genome sequence of the hyperthermophilic crenarchaeon Pyrobaculum aerophilum.</title>
        <authorList>
            <person name="Fitz-Gibbon S.T."/>
            <person name="Ladner H."/>
            <person name="Kim U.-J."/>
            <person name="Stetter K.O."/>
            <person name="Simon M.I."/>
            <person name="Miller J.H."/>
        </authorList>
    </citation>
    <scope>NUCLEOTIDE SEQUENCE [LARGE SCALE GENOMIC DNA]</scope>
    <source>
        <strain>ATCC 51768 / DSM 7523 / JCM 9630 / CIP 104966 / NBRC 100827 / IM2</strain>
    </source>
</reference>
<name>RS11_PYRAE</name>
<protein>
    <recommendedName>
        <fullName evidence="1">Small ribosomal subunit protein uS11</fullName>
    </recommendedName>
    <alternativeName>
        <fullName evidence="2">30S ribosomal protein S11</fullName>
    </alternativeName>
</protein>
<proteinExistence type="inferred from homology"/>
<feature type="chain" id="PRO_0000123278" description="Small ribosomal subunit protein uS11">
    <location>
        <begin position="1"/>
        <end position="133"/>
    </location>
</feature>
<sequence length="133" mass="14079">MSSEQQKLRWGIAWIYSSSNNTIITITDLTGAETVARVSGGQVVRADKDKPSPWAAMQAAYKAAQLALARGINAVHIKVRGPGGYGMKVPGPGASAAIRALARSGLVIGRIEDVTPIPHDIIRPPSGRKGRRV</sequence>
<comment type="function">
    <text evidence="1">Located on the platform of the 30S subunit.</text>
</comment>
<comment type="subunit">
    <text evidence="1">Part of the 30S ribosomal subunit.</text>
</comment>
<comment type="similarity">
    <text evidence="1">Belongs to the universal ribosomal protein uS11 family.</text>
</comment>